<protein>
    <recommendedName>
        <fullName>Uncharacterized protein RC0142</fullName>
    </recommendedName>
</protein>
<keyword id="KW-1003">Cell membrane</keyword>
<keyword id="KW-0472">Membrane</keyword>
<keyword id="KW-0732">Signal</keyword>
<keyword id="KW-0812">Transmembrane</keyword>
<keyword id="KW-1133">Transmembrane helix</keyword>
<reference key="1">
    <citation type="journal article" date="2001" name="Science">
        <title>Mechanisms of evolution in Rickettsia conorii and R. prowazekii.</title>
        <authorList>
            <person name="Ogata H."/>
            <person name="Audic S."/>
            <person name="Renesto-Audiffren P."/>
            <person name="Fournier P.-E."/>
            <person name="Barbe V."/>
            <person name="Samson D."/>
            <person name="Roux V."/>
            <person name="Cossart P."/>
            <person name="Weissenbach J."/>
            <person name="Claverie J.-M."/>
            <person name="Raoult D."/>
        </authorList>
    </citation>
    <scope>NUCLEOTIDE SEQUENCE [LARGE SCALE GENOMIC DNA]</scope>
    <source>
        <strain>ATCC VR-613 / Malish 7</strain>
    </source>
</reference>
<accession>Q92JC5</accession>
<name>Y142_RICCN</name>
<evidence type="ECO:0000255" key="1"/>
<evidence type="ECO:0000256" key="2">
    <source>
        <dbReference type="SAM" id="MobiDB-lite"/>
    </source>
</evidence>
<evidence type="ECO:0000305" key="3"/>
<sequence>MKLFPRSILITLVLSFALNLGIVTKIHAKDTLDSIVDILSGLTCETQGVGDLLRTEFSHTCIVAPFFTFAVMNLVSPVLYMNTFLKLKINDSDLFNDSNFGNFPGGQCTRENRIDPKNPELRFALCNNAKLIVSRAKSVAESALAIAKAVLTGSDPWDDIKTAWANKKKEYHVPYSGKPGDDGFAFDLGFPVIYWKVIQDKDRICVSTKGFTGDVPVGCKYMKEPFPKSMYNSFMDVADKDFIEDPNKTPTDPLALVSCSAAGDGCYQKAYNASKTAVVMTSPLIECMRQMIARLLISKDVCSFDNVSQVVNLVSRQDSVFFQFQVGMYKIVTAFLTLYVMFFGFKLLLAGEVPPKSEYINFILKMIFVTYFSIGINITPGNGSPYDRLDGMIQWAFPFLLDGINGLASWVMNAAPSGLCKFNNLSYDGTVSYIALWDALDCRVAHYLGLDILSTLLVENAYRSHDFLNFDFFSFSAPPYIYLLIPAIISGNMMLVSLALSYPLLVISVAAFMVNATIMCMISIVILGILAPLFVPMFLFAYTRNYFESWVKLMISFLLQPMVVVTFMITMFSVYDYGFYGKCQYKSKLIHNSIEDKIQGGITSKRDVLIFYINNDWDDTSQYPDKDAVESCQNSLGYMLNNPITTVFNFTKDSVSEIVGSKPGSTPTDKFLAKFQFLSGVVLGPGMFFMSPKVLFEKIKNILLALVMACFTLYLMYNFSSQLAEFAADMTEGVALNNVAIKPQAIFKAAMAVLATAGAATKGGDQIASRGGVGDLKAGQGGGASDLEVGKGGLPNDNIAASGGTSAPAVTTPTASSSVASSSPKTVSSEARSDVVTPPAPTEAVSPPPASIRTSISTLAPRVGKIIRDNNQESKKEIDNTPPSQEKVDNAAPQEKVDSTSKGTGVIDYSFNLKEHDNPTGVKQIRENAEIRDKRVKVEKAWNELVARGGGRVREQEGGEISERRANAEKAWDELVKSGVVTEKKDNSSNENS</sequence>
<organism>
    <name type="scientific">Rickettsia conorii (strain ATCC VR-613 / Malish 7)</name>
    <dbReference type="NCBI Taxonomy" id="272944"/>
    <lineage>
        <taxon>Bacteria</taxon>
        <taxon>Pseudomonadati</taxon>
        <taxon>Pseudomonadota</taxon>
        <taxon>Alphaproteobacteria</taxon>
        <taxon>Rickettsiales</taxon>
        <taxon>Rickettsiaceae</taxon>
        <taxon>Rickettsieae</taxon>
        <taxon>Rickettsia</taxon>
        <taxon>spotted fever group</taxon>
    </lineage>
</organism>
<comment type="subcellular location">
    <subcellularLocation>
        <location evidence="3">Cell membrane</location>
        <topology evidence="3">Multi-pass membrane protein</topology>
    </subcellularLocation>
</comment>
<comment type="similarity">
    <text evidence="3">Belongs to the TrbL/VirB6 family.</text>
</comment>
<feature type="signal peptide" evidence="1">
    <location>
        <begin position="1"/>
        <end position="28"/>
    </location>
</feature>
<feature type="chain" id="PRO_0000269203" description="Uncharacterized protein RC0142">
    <location>
        <begin position="29"/>
        <end position="993"/>
    </location>
</feature>
<feature type="transmembrane region" description="Helical" evidence="1">
    <location>
        <begin position="331"/>
        <end position="351"/>
    </location>
</feature>
<feature type="transmembrane region" description="Helical" evidence="1">
    <location>
        <begin position="359"/>
        <end position="379"/>
    </location>
</feature>
<feature type="transmembrane region" description="Helical" evidence="1">
    <location>
        <begin position="392"/>
        <end position="412"/>
    </location>
</feature>
<feature type="transmembrane region" description="Helical" evidence="1">
    <location>
        <begin position="494"/>
        <end position="514"/>
    </location>
</feature>
<feature type="transmembrane region" description="Helical" evidence="1">
    <location>
        <begin position="521"/>
        <end position="541"/>
    </location>
</feature>
<feature type="transmembrane region" description="Helical" evidence="1">
    <location>
        <begin position="554"/>
        <end position="574"/>
    </location>
</feature>
<feature type="transmembrane region" description="Helical" evidence="1">
    <location>
        <begin position="699"/>
        <end position="719"/>
    </location>
</feature>
<feature type="region of interest" description="Disordered" evidence="2">
    <location>
        <begin position="779"/>
        <end position="904"/>
    </location>
</feature>
<feature type="compositionally biased region" description="Low complexity" evidence="2">
    <location>
        <begin position="805"/>
        <end position="829"/>
    </location>
</feature>
<feature type="compositionally biased region" description="Pro residues" evidence="2">
    <location>
        <begin position="838"/>
        <end position="850"/>
    </location>
</feature>
<feature type="compositionally biased region" description="Basic and acidic residues" evidence="2">
    <location>
        <begin position="866"/>
        <end position="879"/>
    </location>
</feature>
<proteinExistence type="inferred from homology"/>
<gene>
    <name type="ordered locus">RC0142</name>
</gene>
<dbReference type="EMBL" id="AE006914">
    <property type="protein sequence ID" value="AAL02680.1"/>
    <property type="molecule type" value="Genomic_DNA"/>
</dbReference>
<dbReference type="PIR" id="F97717">
    <property type="entry name" value="F97717"/>
</dbReference>
<dbReference type="RefSeq" id="WP_010976819.1">
    <property type="nucleotide sequence ID" value="NC_003103.1"/>
</dbReference>
<dbReference type="SMR" id="Q92JC5"/>
<dbReference type="GeneID" id="928047"/>
<dbReference type="KEGG" id="rco:RC0142"/>
<dbReference type="PATRIC" id="fig|272944.4.peg.166"/>
<dbReference type="HOGENOM" id="CLU_279905_0_0_5"/>
<dbReference type="Proteomes" id="UP000000816">
    <property type="component" value="Chromosome"/>
</dbReference>
<dbReference type="GO" id="GO:0005886">
    <property type="term" value="C:plasma membrane"/>
    <property type="evidence" value="ECO:0007669"/>
    <property type="project" value="UniProtKB-SubCell"/>
</dbReference>
<dbReference type="GO" id="GO:0030255">
    <property type="term" value="P:protein secretion by the type IV secretion system"/>
    <property type="evidence" value="ECO:0007669"/>
    <property type="project" value="InterPro"/>
</dbReference>
<dbReference type="InterPro" id="IPR007688">
    <property type="entry name" value="Conjugal_tfr_TrbL/VirB6"/>
</dbReference>
<dbReference type="Pfam" id="PF04610">
    <property type="entry name" value="TrbL"/>
    <property type="match status" value="1"/>
</dbReference>